<keyword id="KW-1185">Reference proteome</keyword>
<keyword id="KW-0687">Ribonucleoprotein</keyword>
<keyword id="KW-0689">Ribosomal protein</keyword>
<accession>Q9L7L8</accession>
<protein>
    <recommendedName>
        <fullName evidence="1">Large ribosomal subunit protein bL34</fullName>
    </recommendedName>
    <alternativeName>
        <fullName>50S ribosomal protein L34</fullName>
    </alternativeName>
</protein>
<comment type="similarity">
    <text evidence="1">Belongs to the bacterial ribosomal protein bL34 family.</text>
</comment>
<sequence>MAKGKRTFQPNNRRRARVHGFRLRMRTRAGRAIVSGRRRKGRRALSA</sequence>
<feature type="chain" id="PRO_0000187422" description="Large ribosomal subunit protein bL34">
    <location>
        <begin position="1"/>
        <end position="47"/>
    </location>
</feature>
<gene>
    <name type="primary">rpmH</name>
    <name type="ordered locus">MAP_4350c</name>
</gene>
<dbReference type="EMBL" id="AF222789">
    <property type="protein sequence ID" value="AAF33690.1"/>
    <property type="molecule type" value="Genomic_DNA"/>
</dbReference>
<dbReference type="EMBL" id="AE016958">
    <property type="protein sequence ID" value="AAS06900.1"/>
    <property type="molecule type" value="Genomic_DNA"/>
</dbReference>
<dbReference type="RefSeq" id="WP_003874369.1">
    <property type="nucleotide sequence ID" value="NZ_CP106873.1"/>
</dbReference>
<dbReference type="SMR" id="Q9L7L8"/>
<dbReference type="STRING" id="262316.MAP_4350c"/>
<dbReference type="GeneID" id="97442252"/>
<dbReference type="KEGG" id="mpa:MAP_4350c"/>
<dbReference type="eggNOG" id="COG0230">
    <property type="taxonomic scope" value="Bacteria"/>
</dbReference>
<dbReference type="HOGENOM" id="CLU_129938_2_1_11"/>
<dbReference type="Proteomes" id="UP000000580">
    <property type="component" value="Chromosome"/>
</dbReference>
<dbReference type="GO" id="GO:1990904">
    <property type="term" value="C:ribonucleoprotein complex"/>
    <property type="evidence" value="ECO:0007669"/>
    <property type="project" value="UniProtKB-KW"/>
</dbReference>
<dbReference type="GO" id="GO:0005840">
    <property type="term" value="C:ribosome"/>
    <property type="evidence" value="ECO:0007669"/>
    <property type="project" value="UniProtKB-KW"/>
</dbReference>
<dbReference type="GO" id="GO:0003735">
    <property type="term" value="F:structural constituent of ribosome"/>
    <property type="evidence" value="ECO:0007669"/>
    <property type="project" value="InterPro"/>
</dbReference>
<dbReference type="GO" id="GO:0006412">
    <property type="term" value="P:translation"/>
    <property type="evidence" value="ECO:0007669"/>
    <property type="project" value="UniProtKB-UniRule"/>
</dbReference>
<dbReference type="FunFam" id="1.10.287.3980:FF:000001">
    <property type="entry name" value="Mitochondrial ribosomal protein L34"/>
    <property type="match status" value="1"/>
</dbReference>
<dbReference type="Gene3D" id="1.10.287.3980">
    <property type="match status" value="1"/>
</dbReference>
<dbReference type="HAMAP" id="MF_00391">
    <property type="entry name" value="Ribosomal_bL34"/>
    <property type="match status" value="1"/>
</dbReference>
<dbReference type="InterPro" id="IPR000271">
    <property type="entry name" value="Ribosomal_bL34"/>
</dbReference>
<dbReference type="InterPro" id="IPR020939">
    <property type="entry name" value="Ribosomal_bL34_CS"/>
</dbReference>
<dbReference type="NCBIfam" id="TIGR01030">
    <property type="entry name" value="rpmH_bact"/>
    <property type="match status" value="1"/>
</dbReference>
<dbReference type="PANTHER" id="PTHR14503:SF4">
    <property type="entry name" value="LARGE RIBOSOMAL SUBUNIT PROTEIN BL34M"/>
    <property type="match status" value="1"/>
</dbReference>
<dbReference type="PANTHER" id="PTHR14503">
    <property type="entry name" value="MITOCHONDRIAL RIBOSOMAL PROTEIN 34 FAMILY MEMBER"/>
    <property type="match status" value="1"/>
</dbReference>
<dbReference type="Pfam" id="PF00468">
    <property type="entry name" value="Ribosomal_L34"/>
    <property type="match status" value="1"/>
</dbReference>
<dbReference type="PROSITE" id="PS00784">
    <property type="entry name" value="RIBOSOMAL_L34"/>
    <property type="match status" value="1"/>
</dbReference>
<organism>
    <name type="scientific">Mycolicibacterium paratuberculosis (strain ATCC BAA-968 / K-10)</name>
    <name type="common">Mycobacterium paratuberculosis</name>
    <dbReference type="NCBI Taxonomy" id="262316"/>
    <lineage>
        <taxon>Bacteria</taxon>
        <taxon>Bacillati</taxon>
        <taxon>Actinomycetota</taxon>
        <taxon>Actinomycetes</taxon>
        <taxon>Mycobacteriales</taxon>
        <taxon>Mycobacteriaceae</taxon>
        <taxon>Mycobacterium</taxon>
        <taxon>Mycobacterium avium complex (MAC)</taxon>
    </lineage>
</organism>
<proteinExistence type="inferred from homology"/>
<reference key="1">
    <citation type="journal article" date="2003" name="BMC Microbiol.">
        <title>Genomic homogeneity between Mycobacterium avium subsp. avium and Mycobacterium avium subsp. paratuberculosis belies their divergent growth rates.</title>
        <authorList>
            <person name="Bannantine J.P."/>
            <person name="Zhang Q."/>
            <person name="Li L.L."/>
            <person name="Kapur V."/>
        </authorList>
    </citation>
    <scope>NUCLEOTIDE SEQUENCE [GENOMIC DNA]</scope>
    <source>
        <strain>ATCC BAA-968 / K-10</strain>
    </source>
</reference>
<reference key="2">
    <citation type="journal article" date="2005" name="Proc. Natl. Acad. Sci. U.S.A.">
        <title>The complete genome sequence of Mycobacterium avium subspecies paratuberculosis.</title>
        <authorList>
            <person name="Li L."/>
            <person name="Bannantine J.P."/>
            <person name="Zhang Q."/>
            <person name="Amonsin A."/>
            <person name="May B.J."/>
            <person name="Alt D."/>
            <person name="Banerji N."/>
            <person name="Kanjilal S."/>
            <person name="Kapur V."/>
        </authorList>
    </citation>
    <scope>NUCLEOTIDE SEQUENCE [LARGE SCALE GENOMIC DNA]</scope>
    <source>
        <strain>ATCC BAA-968 / K-10</strain>
    </source>
</reference>
<name>RL34_MYCPA</name>
<evidence type="ECO:0000305" key="1"/>